<gene>
    <name evidence="1" type="primary">gatB</name>
    <name type="ordered locus">BB4532</name>
</gene>
<evidence type="ECO:0000255" key="1">
    <source>
        <dbReference type="HAMAP-Rule" id="MF_00121"/>
    </source>
</evidence>
<name>GATB_BORBR</name>
<dbReference type="EC" id="6.3.5.-" evidence="1"/>
<dbReference type="EMBL" id="BX640450">
    <property type="protein sequence ID" value="CAE34895.1"/>
    <property type="molecule type" value="Genomic_DNA"/>
</dbReference>
<dbReference type="RefSeq" id="WP_003815208.1">
    <property type="nucleotide sequence ID" value="NC_002927.3"/>
</dbReference>
<dbReference type="SMR" id="Q7WEV0"/>
<dbReference type="GeneID" id="56476969"/>
<dbReference type="KEGG" id="bbr:BB4532"/>
<dbReference type="eggNOG" id="COG0064">
    <property type="taxonomic scope" value="Bacteria"/>
</dbReference>
<dbReference type="HOGENOM" id="CLU_019240_0_0_4"/>
<dbReference type="Proteomes" id="UP000001027">
    <property type="component" value="Chromosome"/>
</dbReference>
<dbReference type="GO" id="GO:0050566">
    <property type="term" value="F:asparaginyl-tRNA synthase (glutamine-hydrolyzing) activity"/>
    <property type="evidence" value="ECO:0007669"/>
    <property type="project" value="RHEA"/>
</dbReference>
<dbReference type="GO" id="GO:0005524">
    <property type="term" value="F:ATP binding"/>
    <property type="evidence" value="ECO:0007669"/>
    <property type="project" value="UniProtKB-KW"/>
</dbReference>
<dbReference type="GO" id="GO:0050567">
    <property type="term" value="F:glutaminyl-tRNA synthase (glutamine-hydrolyzing) activity"/>
    <property type="evidence" value="ECO:0007669"/>
    <property type="project" value="UniProtKB-UniRule"/>
</dbReference>
<dbReference type="GO" id="GO:0070681">
    <property type="term" value="P:glutaminyl-tRNAGln biosynthesis via transamidation"/>
    <property type="evidence" value="ECO:0007669"/>
    <property type="project" value="TreeGrafter"/>
</dbReference>
<dbReference type="GO" id="GO:0006412">
    <property type="term" value="P:translation"/>
    <property type="evidence" value="ECO:0007669"/>
    <property type="project" value="UniProtKB-UniRule"/>
</dbReference>
<dbReference type="FunFam" id="1.10.10.410:FF:000001">
    <property type="entry name" value="Aspartyl/glutamyl-tRNA(Asn/Gln) amidotransferase subunit B"/>
    <property type="match status" value="1"/>
</dbReference>
<dbReference type="FunFam" id="1.10.150.380:FF:000001">
    <property type="entry name" value="Aspartyl/glutamyl-tRNA(Asn/Gln) amidotransferase subunit B"/>
    <property type="match status" value="1"/>
</dbReference>
<dbReference type="Gene3D" id="1.10.10.410">
    <property type="match status" value="1"/>
</dbReference>
<dbReference type="Gene3D" id="1.10.150.380">
    <property type="entry name" value="GatB domain, N-terminal subdomain"/>
    <property type="match status" value="1"/>
</dbReference>
<dbReference type="HAMAP" id="MF_00121">
    <property type="entry name" value="GatB"/>
    <property type="match status" value="1"/>
</dbReference>
<dbReference type="InterPro" id="IPR017959">
    <property type="entry name" value="Asn/Gln-tRNA_amidoTrfase_suB/E"/>
</dbReference>
<dbReference type="InterPro" id="IPR006075">
    <property type="entry name" value="Asn/Gln-tRNA_Trfase_suB/E_cat"/>
</dbReference>
<dbReference type="InterPro" id="IPR018027">
    <property type="entry name" value="Asn/Gln_amidotransferase"/>
</dbReference>
<dbReference type="InterPro" id="IPR003789">
    <property type="entry name" value="Asn/Gln_tRNA_amidoTrase-B-like"/>
</dbReference>
<dbReference type="InterPro" id="IPR004413">
    <property type="entry name" value="GatB"/>
</dbReference>
<dbReference type="InterPro" id="IPR042114">
    <property type="entry name" value="GatB_C_1"/>
</dbReference>
<dbReference type="InterPro" id="IPR023168">
    <property type="entry name" value="GatB_Yqey_C_2"/>
</dbReference>
<dbReference type="InterPro" id="IPR017958">
    <property type="entry name" value="Gln-tRNA_amidoTrfase_suB_CS"/>
</dbReference>
<dbReference type="InterPro" id="IPR014746">
    <property type="entry name" value="Gln_synth/guanido_kin_cat_dom"/>
</dbReference>
<dbReference type="NCBIfam" id="TIGR00133">
    <property type="entry name" value="gatB"/>
    <property type="match status" value="1"/>
</dbReference>
<dbReference type="NCBIfam" id="NF004012">
    <property type="entry name" value="PRK05477.1-2"/>
    <property type="match status" value="1"/>
</dbReference>
<dbReference type="NCBIfam" id="NF004014">
    <property type="entry name" value="PRK05477.1-4"/>
    <property type="match status" value="1"/>
</dbReference>
<dbReference type="NCBIfam" id="NF004015">
    <property type="entry name" value="PRK05477.1-5"/>
    <property type="match status" value="1"/>
</dbReference>
<dbReference type="PANTHER" id="PTHR11659">
    <property type="entry name" value="GLUTAMYL-TRNA GLN AMIDOTRANSFERASE SUBUNIT B MITOCHONDRIAL AND PROKARYOTIC PET112-RELATED"/>
    <property type="match status" value="1"/>
</dbReference>
<dbReference type="PANTHER" id="PTHR11659:SF0">
    <property type="entry name" value="GLUTAMYL-TRNA(GLN) AMIDOTRANSFERASE SUBUNIT B, MITOCHONDRIAL"/>
    <property type="match status" value="1"/>
</dbReference>
<dbReference type="Pfam" id="PF02934">
    <property type="entry name" value="GatB_N"/>
    <property type="match status" value="1"/>
</dbReference>
<dbReference type="Pfam" id="PF02637">
    <property type="entry name" value="GatB_Yqey"/>
    <property type="match status" value="1"/>
</dbReference>
<dbReference type="SMART" id="SM00845">
    <property type="entry name" value="GatB_Yqey"/>
    <property type="match status" value="1"/>
</dbReference>
<dbReference type="SUPFAM" id="SSF89095">
    <property type="entry name" value="GatB/YqeY motif"/>
    <property type="match status" value="1"/>
</dbReference>
<dbReference type="SUPFAM" id="SSF55931">
    <property type="entry name" value="Glutamine synthetase/guanido kinase"/>
    <property type="match status" value="1"/>
</dbReference>
<dbReference type="PROSITE" id="PS01234">
    <property type="entry name" value="GATB"/>
    <property type="match status" value="1"/>
</dbReference>
<organism>
    <name type="scientific">Bordetella bronchiseptica (strain ATCC BAA-588 / NCTC 13252 / RB50)</name>
    <name type="common">Alcaligenes bronchisepticus</name>
    <dbReference type="NCBI Taxonomy" id="257310"/>
    <lineage>
        <taxon>Bacteria</taxon>
        <taxon>Pseudomonadati</taxon>
        <taxon>Pseudomonadota</taxon>
        <taxon>Betaproteobacteria</taxon>
        <taxon>Burkholderiales</taxon>
        <taxon>Alcaligenaceae</taxon>
        <taxon>Bordetella</taxon>
    </lineage>
</organism>
<feature type="chain" id="PRO_0000148765" description="Aspartyl/glutamyl-tRNA(Asn/Gln) amidotransferase subunit B">
    <location>
        <begin position="1"/>
        <end position="484"/>
    </location>
</feature>
<keyword id="KW-0067">ATP-binding</keyword>
<keyword id="KW-0436">Ligase</keyword>
<keyword id="KW-0547">Nucleotide-binding</keyword>
<keyword id="KW-0648">Protein biosynthesis</keyword>
<sequence>MNWEIVIGLETHTQLSTDSKIFSGSSTRFGAAPNTQANAVDLALPGSLPVMNRGAAERAILFGLAVGGKVAPRSVFARKNYFYPDLPKGYQISQYELPVVEGGTLSFFVGEEEKTVNLTRAHLEEDAGKSLHDEFSLASGAPASGIDLNRAGTPLLEIVTEPEMRSAAEAVAYARALHSLVVWLGICDGNMQEGSFRCDANVSVRPVGQKEFGTRTEIKNVNSFRFLERAILFEARRQIELIEDGGTVVQETRLYDADRDETRSMRSKEDAHDYRYFPDPDLPPLVIGQDWVDAVRAGMPELPAAQRARFEADYGLPAYDAAQLTVSRAMADYFEAVARALPAGQAKLAANWIMGEVAATLNREEKDIDAAPVSAAALAALINRIIDGTISNKIARDVFAAMWAGENGGDADAIIAARGLKQISDSGAIGAMIDEVLAANPAIVEEYRAGKQKAFNSLVGQIMKAAKGKANPQQVNELLKEKLG</sequence>
<reference key="1">
    <citation type="journal article" date="2003" name="Nat. Genet.">
        <title>Comparative analysis of the genome sequences of Bordetella pertussis, Bordetella parapertussis and Bordetella bronchiseptica.</title>
        <authorList>
            <person name="Parkhill J."/>
            <person name="Sebaihia M."/>
            <person name="Preston A."/>
            <person name="Murphy L.D."/>
            <person name="Thomson N.R."/>
            <person name="Harris D.E."/>
            <person name="Holden M.T.G."/>
            <person name="Churcher C.M."/>
            <person name="Bentley S.D."/>
            <person name="Mungall K.L."/>
            <person name="Cerdeno-Tarraga A.-M."/>
            <person name="Temple L."/>
            <person name="James K.D."/>
            <person name="Harris B."/>
            <person name="Quail M.A."/>
            <person name="Achtman M."/>
            <person name="Atkin R."/>
            <person name="Baker S."/>
            <person name="Basham D."/>
            <person name="Bason N."/>
            <person name="Cherevach I."/>
            <person name="Chillingworth T."/>
            <person name="Collins M."/>
            <person name="Cronin A."/>
            <person name="Davis P."/>
            <person name="Doggett J."/>
            <person name="Feltwell T."/>
            <person name="Goble A."/>
            <person name="Hamlin N."/>
            <person name="Hauser H."/>
            <person name="Holroyd S."/>
            <person name="Jagels K."/>
            <person name="Leather S."/>
            <person name="Moule S."/>
            <person name="Norberczak H."/>
            <person name="O'Neil S."/>
            <person name="Ormond D."/>
            <person name="Price C."/>
            <person name="Rabbinowitsch E."/>
            <person name="Rutter S."/>
            <person name="Sanders M."/>
            <person name="Saunders D."/>
            <person name="Seeger K."/>
            <person name="Sharp S."/>
            <person name="Simmonds M."/>
            <person name="Skelton J."/>
            <person name="Squares R."/>
            <person name="Squares S."/>
            <person name="Stevens K."/>
            <person name="Unwin L."/>
            <person name="Whitehead S."/>
            <person name="Barrell B.G."/>
            <person name="Maskell D.J."/>
        </authorList>
    </citation>
    <scope>NUCLEOTIDE SEQUENCE [LARGE SCALE GENOMIC DNA]</scope>
    <source>
        <strain>ATCC BAA-588 / NCTC 13252 / RB50</strain>
    </source>
</reference>
<protein>
    <recommendedName>
        <fullName evidence="1">Aspartyl/glutamyl-tRNA(Asn/Gln) amidotransferase subunit B</fullName>
        <shortName evidence="1">Asp/Glu-ADT subunit B</shortName>
        <ecNumber evidence="1">6.3.5.-</ecNumber>
    </recommendedName>
</protein>
<accession>Q7WEV0</accession>
<proteinExistence type="inferred from homology"/>
<comment type="function">
    <text evidence="1">Allows the formation of correctly charged Asn-tRNA(Asn) or Gln-tRNA(Gln) through the transamidation of misacylated Asp-tRNA(Asn) or Glu-tRNA(Gln) in organisms which lack either or both of asparaginyl-tRNA or glutaminyl-tRNA synthetases. The reaction takes place in the presence of glutamine and ATP through an activated phospho-Asp-tRNA(Asn) or phospho-Glu-tRNA(Gln).</text>
</comment>
<comment type="catalytic activity">
    <reaction evidence="1">
        <text>L-glutamyl-tRNA(Gln) + L-glutamine + ATP + H2O = L-glutaminyl-tRNA(Gln) + L-glutamate + ADP + phosphate + H(+)</text>
        <dbReference type="Rhea" id="RHEA:17521"/>
        <dbReference type="Rhea" id="RHEA-COMP:9681"/>
        <dbReference type="Rhea" id="RHEA-COMP:9684"/>
        <dbReference type="ChEBI" id="CHEBI:15377"/>
        <dbReference type="ChEBI" id="CHEBI:15378"/>
        <dbReference type="ChEBI" id="CHEBI:29985"/>
        <dbReference type="ChEBI" id="CHEBI:30616"/>
        <dbReference type="ChEBI" id="CHEBI:43474"/>
        <dbReference type="ChEBI" id="CHEBI:58359"/>
        <dbReference type="ChEBI" id="CHEBI:78520"/>
        <dbReference type="ChEBI" id="CHEBI:78521"/>
        <dbReference type="ChEBI" id="CHEBI:456216"/>
    </reaction>
</comment>
<comment type="catalytic activity">
    <reaction evidence="1">
        <text>L-aspartyl-tRNA(Asn) + L-glutamine + ATP + H2O = L-asparaginyl-tRNA(Asn) + L-glutamate + ADP + phosphate + 2 H(+)</text>
        <dbReference type="Rhea" id="RHEA:14513"/>
        <dbReference type="Rhea" id="RHEA-COMP:9674"/>
        <dbReference type="Rhea" id="RHEA-COMP:9677"/>
        <dbReference type="ChEBI" id="CHEBI:15377"/>
        <dbReference type="ChEBI" id="CHEBI:15378"/>
        <dbReference type="ChEBI" id="CHEBI:29985"/>
        <dbReference type="ChEBI" id="CHEBI:30616"/>
        <dbReference type="ChEBI" id="CHEBI:43474"/>
        <dbReference type="ChEBI" id="CHEBI:58359"/>
        <dbReference type="ChEBI" id="CHEBI:78515"/>
        <dbReference type="ChEBI" id="CHEBI:78516"/>
        <dbReference type="ChEBI" id="CHEBI:456216"/>
    </reaction>
</comment>
<comment type="subunit">
    <text evidence="1">Heterotrimer of A, B and C subunits.</text>
</comment>
<comment type="similarity">
    <text evidence="1">Belongs to the GatB/GatE family. GatB subfamily.</text>
</comment>